<reference key="1">
    <citation type="journal article" date="2004" name="Nat. Genet.">
        <title>Complete sequencing and characterization of 21,243 full-length human cDNAs.</title>
        <authorList>
            <person name="Ota T."/>
            <person name="Suzuki Y."/>
            <person name="Nishikawa T."/>
            <person name="Otsuki T."/>
            <person name="Sugiyama T."/>
            <person name="Irie R."/>
            <person name="Wakamatsu A."/>
            <person name="Hayashi K."/>
            <person name="Sato H."/>
            <person name="Nagai K."/>
            <person name="Kimura K."/>
            <person name="Makita H."/>
            <person name="Sekine M."/>
            <person name="Obayashi M."/>
            <person name="Nishi T."/>
            <person name="Shibahara T."/>
            <person name="Tanaka T."/>
            <person name="Ishii S."/>
            <person name="Yamamoto J."/>
            <person name="Saito K."/>
            <person name="Kawai Y."/>
            <person name="Isono Y."/>
            <person name="Nakamura Y."/>
            <person name="Nagahari K."/>
            <person name="Murakami K."/>
            <person name="Yasuda T."/>
            <person name="Iwayanagi T."/>
            <person name="Wagatsuma M."/>
            <person name="Shiratori A."/>
            <person name="Sudo H."/>
            <person name="Hosoiri T."/>
            <person name="Kaku Y."/>
            <person name="Kodaira H."/>
            <person name="Kondo H."/>
            <person name="Sugawara M."/>
            <person name="Takahashi M."/>
            <person name="Kanda K."/>
            <person name="Yokoi T."/>
            <person name="Furuya T."/>
            <person name="Kikkawa E."/>
            <person name="Omura Y."/>
            <person name="Abe K."/>
            <person name="Kamihara K."/>
            <person name="Katsuta N."/>
            <person name="Sato K."/>
            <person name="Tanikawa M."/>
            <person name="Yamazaki M."/>
            <person name="Ninomiya K."/>
            <person name="Ishibashi T."/>
            <person name="Yamashita H."/>
            <person name="Murakawa K."/>
            <person name="Fujimori K."/>
            <person name="Tanai H."/>
            <person name="Kimata M."/>
            <person name="Watanabe M."/>
            <person name="Hiraoka S."/>
            <person name="Chiba Y."/>
            <person name="Ishida S."/>
            <person name="Ono Y."/>
            <person name="Takiguchi S."/>
            <person name="Watanabe S."/>
            <person name="Yosida M."/>
            <person name="Hotuta T."/>
            <person name="Kusano J."/>
            <person name="Kanehori K."/>
            <person name="Takahashi-Fujii A."/>
            <person name="Hara H."/>
            <person name="Tanase T.-O."/>
            <person name="Nomura Y."/>
            <person name="Togiya S."/>
            <person name="Komai F."/>
            <person name="Hara R."/>
            <person name="Takeuchi K."/>
            <person name="Arita M."/>
            <person name="Imose N."/>
            <person name="Musashino K."/>
            <person name="Yuuki H."/>
            <person name="Oshima A."/>
            <person name="Sasaki N."/>
            <person name="Aotsuka S."/>
            <person name="Yoshikawa Y."/>
            <person name="Matsunawa H."/>
            <person name="Ichihara T."/>
            <person name="Shiohata N."/>
            <person name="Sano S."/>
            <person name="Moriya S."/>
            <person name="Momiyama H."/>
            <person name="Satoh N."/>
            <person name="Takami S."/>
            <person name="Terashima Y."/>
            <person name="Suzuki O."/>
            <person name="Nakagawa S."/>
            <person name="Senoh A."/>
            <person name="Mizoguchi H."/>
            <person name="Goto Y."/>
            <person name="Shimizu F."/>
            <person name="Wakebe H."/>
            <person name="Hishigaki H."/>
            <person name="Watanabe T."/>
            <person name="Sugiyama A."/>
            <person name="Takemoto M."/>
            <person name="Kawakami B."/>
            <person name="Yamazaki M."/>
            <person name="Watanabe K."/>
            <person name="Kumagai A."/>
            <person name="Itakura S."/>
            <person name="Fukuzumi Y."/>
            <person name="Fujimori Y."/>
            <person name="Komiyama M."/>
            <person name="Tashiro H."/>
            <person name="Tanigami A."/>
            <person name="Fujiwara T."/>
            <person name="Ono T."/>
            <person name="Yamada K."/>
            <person name="Fujii Y."/>
            <person name="Ozaki K."/>
            <person name="Hirao M."/>
            <person name="Ohmori Y."/>
            <person name="Kawabata A."/>
            <person name="Hikiji T."/>
            <person name="Kobatake N."/>
            <person name="Inagaki H."/>
            <person name="Ikema Y."/>
            <person name="Okamoto S."/>
            <person name="Okitani R."/>
            <person name="Kawakami T."/>
            <person name="Noguchi S."/>
            <person name="Itoh T."/>
            <person name="Shigeta K."/>
            <person name="Senba T."/>
            <person name="Matsumura K."/>
            <person name="Nakajima Y."/>
            <person name="Mizuno T."/>
            <person name="Morinaga M."/>
            <person name="Sasaki M."/>
            <person name="Togashi T."/>
            <person name="Oyama M."/>
            <person name="Hata H."/>
            <person name="Watanabe M."/>
            <person name="Komatsu T."/>
            <person name="Mizushima-Sugano J."/>
            <person name="Satoh T."/>
            <person name="Shirai Y."/>
            <person name="Takahashi Y."/>
            <person name="Nakagawa K."/>
            <person name="Okumura K."/>
            <person name="Nagase T."/>
            <person name="Nomura N."/>
            <person name="Kikuchi H."/>
            <person name="Masuho Y."/>
            <person name="Yamashita R."/>
            <person name="Nakai K."/>
            <person name="Yada T."/>
            <person name="Nakamura Y."/>
            <person name="Ohara O."/>
            <person name="Isogai T."/>
            <person name="Sugano S."/>
        </authorList>
    </citation>
    <scope>NUCLEOTIDE SEQUENCE [LARGE SCALE MRNA]</scope>
    <source>
        <tissue>Testis</tissue>
    </source>
</reference>
<reference key="2">
    <citation type="journal article" date="2004" name="Genome Res.">
        <title>The status, quality, and expansion of the NIH full-length cDNA project: the Mammalian Gene Collection (MGC).</title>
        <authorList>
            <consortium name="The MGC Project Team"/>
        </authorList>
    </citation>
    <scope>NUCLEOTIDE SEQUENCE [LARGE SCALE MRNA]</scope>
    <source>
        <tissue>Colon</tissue>
    </source>
</reference>
<reference key="3">
    <citation type="journal article" date="2011" name="BMC Syst. Biol.">
        <title>Initial characterization of the human central proteome.</title>
        <authorList>
            <person name="Burkard T.R."/>
            <person name="Planyavsky M."/>
            <person name="Kaupe I."/>
            <person name="Breitwieser F.P."/>
            <person name="Buerckstuemmer T."/>
            <person name="Bennett K.L."/>
            <person name="Superti-Furga G."/>
            <person name="Colinge J."/>
        </authorList>
    </citation>
    <scope>IDENTIFICATION BY MASS SPECTROMETRY [LARGE SCALE ANALYSIS]</scope>
</reference>
<protein>
    <recommendedName>
        <fullName>Coiled-coil domain-containing protein 127</fullName>
    </recommendedName>
</protein>
<name>CC127_HUMAN</name>
<accession>Q96BQ5</accession>
<proteinExistence type="evidence at protein level"/>
<organism>
    <name type="scientific">Homo sapiens</name>
    <name type="common">Human</name>
    <dbReference type="NCBI Taxonomy" id="9606"/>
    <lineage>
        <taxon>Eukaryota</taxon>
        <taxon>Metazoa</taxon>
        <taxon>Chordata</taxon>
        <taxon>Craniata</taxon>
        <taxon>Vertebrata</taxon>
        <taxon>Euteleostomi</taxon>
        <taxon>Mammalia</taxon>
        <taxon>Eutheria</taxon>
        <taxon>Euarchontoglires</taxon>
        <taxon>Primates</taxon>
        <taxon>Haplorrhini</taxon>
        <taxon>Catarrhini</taxon>
        <taxon>Hominidae</taxon>
        <taxon>Homo</taxon>
    </lineage>
</organism>
<keyword id="KW-0175">Coiled coil</keyword>
<keyword id="KW-1267">Proteomics identification</keyword>
<keyword id="KW-1185">Reference proteome</keyword>
<evidence type="ECO:0000255" key="1"/>
<dbReference type="EMBL" id="AK098567">
    <property type="protein sequence ID" value="BAC05336.1"/>
    <property type="molecule type" value="mRNA"/>
</dbReference>
<dbReference type="EMBL" id="BC015349">
    <property type="protein sequence ID" value="AAH15349.1"/>
    <property type="molecule type" value="mRNA"/>
</dbReference>
<dbReference type="CCDS" id="CCDS3852.1"/>
<dbReference type="RefSeq" id="NP_660308.1">
    <property type="nucleotide sequence ID" value="NM_145265.3"/>
</dbReference>
<dbReference type="SMR" id="Q96BQ5"/>
<dbReference type="BioGRID" id="126379">
    <property type="interactions" value="27"/>
</dbReference>
<dbReference type="FunCoup" id="Q96BQ5">
    <property type="interactions" value="803"/>
</dbReference>
<dbReference type="IntAct" id="Q96BQ5">
    <property type="interactions" value="18"/>
</dbReference>
<dbReference type="MINT" id="Q96BQ5"/>
<dbReference type="STRING" id="9606.ENSP00000296824"/>
<dbReference type="GlyGen" id="Q96BQ5">
    <property type="glycosylation" value="2 sites, 1 N-linked glycan (1 site), 1 O-linked glycan (1 site)"/>
</dbReference>
<dbReference type="iPTMnet" id="Q96BQ5"/>
<dbReference type="PhosphoSitePlus" id="Q96BQ5"/>
<dbReference type="BioMuta" id="CCDC127"/>
<dbReference type="DMDM" id="74731264"/>
<dbReference type="jPOST" id="Q96BQ5"/>
<dbReference type="MassIVE" id="Q96BQ5"/>
<dbReference type="PaxDb" id="9606-ENSP00000296824"/>
<dbReference type="PeptideAtlas" id="Q96BQ5"/>
<dbReference type="ProteomicsDB" id="76099"/>
<dbReference type="Pumba" id="Q96BQ5"/>
<dbReference type="Antibodypedia" id="22206">
    <property type="antibodies" value="86 antibodies from 17 providers"/>
</dbReference>
<dbReference type="DNASU" id="133957"/>
<dbReference type="Ensembl" id="ENST00000296824.4">
    <property type="protein sequence ID" value="ENSP00000296824.2"/>
    <property type="gene ID" value="ENSG00000164366.4"/>
</dbReference>
<dbReference type="GeneID" id="133957"/>
<dbReference type="KEGG" id="hsa:133957"/>
<dbReference type="MANE-Select" id="ENST00000296824.4">
    <property type="protein sequence ID" value="ENSP00000296824.2"/>
    <property type="RefSeq nucleotide sequence ID" value="NM_145265.3"/>
    <property type="RefSeq protein sequence ID" value="NP_660308.1"/>
</dbReference>
<dbReference type="UCSC" id="uc003jam.2">
    <property type="organism name" value="human"/>
</dbReference>
<dbReference type="AGR" id="HGNC:30520"/>
<dbReference type="CTD" id="133957"/>
<dbReference type="GeneCards" id="CCDC127"/>
<dbReference type="HGNC" id="HGNC:30520">
    <property type="gene designation" value="CCDC127"/>
</dbReference>
<dbReference type="HPA" id="ENSG00000164366">
    <property type="expression patterns" value="Low tissue specificity"/>
</dbReference>
<dbReference type="MalaCards" id="CCDC127"/>
<dbReference type="neXtProt" id="NX_Q96BQ5"/>
<dbReference type="OpenTargets" id="ENSG00000164366"/>
<dbReference type="PharmGKB" id="PA162381297"/>
<dbReference type="VEuPathDB" id="HostDB:ENSG00000164366"/>
<dbReference type="eggNOG" id="ENOG502QVKQ">
    <property type="taxonomic scope" value="Eukaryota"/>
</dbReference>
<dbReference type="GeneTree" id="ENSGT00390000008818"/>
<dbReference type="HOGENOM" id="CLU_072814_0_0_1"/>
<dbReference type="InParanoid" id="Q96BQ5"/>
<dbReference type="OMA" id="YWELIVE"/>
<dbReference type="OrthoDB" id="10064762at2759"/>
<dbReference type="PAN-GO" id="Q96BQ5">
    <property type="GO annotations" value="0 GO annotations based on evolutionary models"/>
</dbReference>
<dbReference type="PhylomeDB" id="Q96BQ5"/>
<dbReference type="TreeFam" id="TF331099"/>
<dbReference type="PathwayCommons" id="Q96BQ5"/>
<dbReference type="SignaLink" id="Q96BQ5"/>
<dbReference type="BioGRID-ORCS" id="133957">
    <property type="hits" value="13 hits in 1152 CRISPR screens"/>
</dbReference>
<dbReference type="CD-CODE" id="FB4E32DD">
    <property type="entry name" value="Presynaptic clusters and postsynaptic densities"/>
</dbReference>
<dbReference type="ChiTaRS" id="CCDC127">
    <property type="organism name" value="human"/>
</dbReference>
<dbReference type="GenomeRNAi" id="133957"/>
<dbReference type="Pharos" id="Q96BQ5">
    <property type="development level" value="Tdark"/>
</dbReference>
<dbReference type="PRO" id="PR:Q96BQ5"/>
<dbReference type="Proteomes" id="UP000005640">
    <property type="component" value="Chromosome 5"/>
</dbReference>
<dbReference type="RNAct" id="Q96BQ5">
    <property type="molecule type" value="protein"/>
</dbReference>
<dbReference type="Bgee" id="ENSG00000164366">
    <property type="expression patterns" value="Expressed in tibialis anterior and 197 other cell types or tissues"/>
</dbReference>
<dbReference type="ExpressionAtlas" id="Q96BQ5">
    <property type="expression patterns" value="baseline and differential"/>
</dbReference>
<dbReference type="GO" id="GO:0005739">
    <property type="term" value="C:mitochondrion"/>
    <property type="evidence" value="ECO:0006056"/>
    <property type="project" value="FlyBase"/>
</dbReference>
<dbReference type="InterPro" id="IPR034607">
    <property type="entry name" value="CCDC127"/>
</dbReference>
<dbReference type="PANTHER" id="PTHR31958">
    <property type="entry name" value="COILED-COIL DOMAIN-CONTAINING PROTEIN 127"/>
    <property type="match status" value="1"/>
</dbReference>
<dbReference type="PANTHER" id="PTHR31958:SF2">
    <property type="entry name" value="COILED-COIL DOMAIN-CONTAINING PROTEIN 127"/>
    <property type="match status" value="1"/>
</dbReference>
<sequence length="260" mass="30834">MNNLNDPPNWNIRPNSRADGGDGSRWNYALLVPMLGLAAFRWIWSRESQKEVEKEREAYRRRTAAFQQDLEAKYHAMISENRRAVAQLSLELEKEQNRTASYREALISQGRKLVEEKKLLEQERAQVMQEKRQVQPLRSAYLSCLQREENWQRRARLLLKEFEAVLTERQNIYCSLFLPRSKRLEIEKSLLVRASVDPVAADLEMAAGLTDIFQHDTYCGDVWNTNKRQNGRLMWLYLKYWELVVELKKFKRVEEAILEK</sequence>
<gene>
    <name type="primary">CCDC127</name>
</gene>
<feature type="chain" id="PRO_0000263750" description="Coiled-coil domain-containing protein 127">
    <location>
        <begin position="1"/>
        <end position="260"/>
    </location>
</feature>
<feature type="coiled-coil region" evidence="1">
    <location>
        <begin position="49"/>
        <end position="135"/>
    </location>
</feature>
<feature type="sequence variant" id="VAR_050737" description="In dbSNP:rs11557427.">
    <original>R</original>
    <variation>H</variation>
    <location>
        <position position="60"/>
    </location>
</feature>